<dbReference type="EC" id="3.6.5.3" evidence="1"/>
<dbReference type="EMBL" id="U37354">
    <property type="protein sequence ID" value="AAC49675.1"/>
    <property type="molecule type" value="mRNA"/>
</dbReference>
<dbReference type="EMBL" id="CU329671">
    <property type="protein sequence ID" value="CAB52807.1"/>
    <property type="molecule type" value="Genomic_DNA"/>
</dbReference>
<dbReference type="PIR" id="T39732">
    <property type="entry name" value="T39732"/>
</dbReference>
<dbReference type="RefSeq" id="NP_595898.1">
    <property type="nucleotide sequence ID" value="NM_001021805.2"/>
</dbReference>
<dbReference type="SMR" id="Q09130"/>
<dbReference type="BioGRID" id="276290">
    <property type="interactions" value="15"/>
</dbReference>
<dbReference type="FunCoup" id="Q09130">
    <property type="interactions" value="510"/>
</dbReference>
<dbReference type="STRING" id="284812.Q09130"/>
<dbReference type="iPTMnet" id="Q09130"/>
<dbReference type="PaxDb" id="4896-SPBC17G9.09.1"/>
<dbReference type="EnsemblFungi" id="SPBC17G9.09.1">
    <property type="protein sequence ID" value="SPBC17G9.09.1:pep"/>
    <property type="gene ID" value="SPBC17G9.09"/>
</dbReference>
<dbReference type="GeneID" id="2539738"/>
<dbReference type="KEGG" id="spo:2539738"/>
<dbReference type="PomBase" id="SPBC17G9.09">
    <property type="gene designation" value="tif213"/>
</dbReference>
<dbReference type="VEuPathDB" id="FungiDB:SPBC17G9.09"/>
<dbReference type="eggNOG" id="KOG0466">
    <property type="taxonomic scope" value="Eukaryota"/>
</dbReference>
<dbReference type="HOGENOM" id="CLU_027154_0_1_1"/>
<dbReference type="InParanoid" id="Q09130"/>
<dbReference type="OMA" id="NIGMVGH"/>
<dbReference type="PhylomeDB" id="Q09130"/>
<dbReference type="Reactome" id="R-SPO-156827">
    <property type="pathway name" value="L13a-mediated translational silencing of Ceruloplasmin expression"/>
</dbReference>
<dbReference type="Reactome" id="R-SPO-382556">
    <property type="pathway name" value="ABC-family proteins mediated transport"/>
</dbReference>
<dbReference type="Reactome" id="R-SPO-72649">
    <property type="pathway name" value="Translation initiation complex formation"/>
</dbReference>
<dbReference type="Reactome" id="R-SPO-72695">
    <property type="pathway name" value="Formation of the ternary complex, and subsequently, the 43S complex"/>
</dbReference>
<dbReference type="Reactome" id="R-SPO-72702">
    <property type="pathway name" value="Ribosomal scanning and start codon recognition"/>
</dbReference>
<dbReference type="Reactome" id="R-SPO-72706">
    <property type="pathway name" value="GTP hydrolysis and joining of the 60S ribosomal subunit"/>
</dbReference>
<dbReference type="Reactome" id="R-SPO-72731">
    <property type="pathway name" value="Recycling of eIF2:GDP"/>
</dbReference>
<dbReference type="Reactome" id="R-SPO-9840373">
    <property type="pathway name" value="Cellular response to mitochondrial stress"/>
</dbReference>
<dbReference type="PRO" id="PR:Q09130"/>
<dbReference type="Proteomes" id="UP000002485">
    <property type="component" value="Chromosome II"/>
</dbReference>
<dbReference type="GO" id="GO:0005737">
    <property type="term" value="C:cytoplasm"/>
    <property type="evidence" value="ECO:0007005"/>
    <property type="project" value="PomBase"/>
</dbReference>
<dbReference type="GO" id="GO:0005829">
    <property type="term" value="C:cytosol"/>
    <property type="evidence" value="ECO:0007005"/>
    <property type="project" value="PomBase"/>
</dbReference>
<dbReference type="GO" id="GO:0005850">
    <property type="term" value="C:eukaryotic translation initiation factor 2 complex"/>
    <property type="evidence" value="ECO:0000250"/>
    <property type="project" value="UniProtKB"/>
</dbReference>
<dbReference type="GO" id="GO:0005525">
    <property type="term" value="F:GTP binding"/>
    <property type="evidence" value="ECO:0007669"/>
    <property type="project" value="UniProtKB-KW"/>
</dbReference>
<dbReference type="GO" id="GO:0003924">
    <property type="term" value="F:GTPase activity"/>
    <property type="evidence" value="ECO:0007669"/>
    <property type="project" value="InterPro"/>
</dbReference>
<dbReference type="GO" id="GO:1990856">
    <property type="term" value="F:methionyl-initiator methionine tRNA binding"/>
    <property type="evidence" value="ECO:0000250"/>
    <property type="project" value="UniProtKB"/>
</dbReference>
<dbReference type="GO" id="GO:0003743">
    <property type="term" value="F:translation initiation factor activity"/>
    <property type="evidence" value="ECO:0000316"/>
    <property type="project" value="PomBase"/>
</dbReference>
<dbReference type="GO" id="GO:0001731">
    <property type="term" value="P:formation of translation preinitiation complex"/>
    <property type="evidence" value="ECO:0000316"/>
    <property type="project" value="PomBase"/>
</dbReference>
<dbReference type="CDD" id="cd01888">
    <property type="entry name" value="eIF2_gamma"/>
    <property type="match status" value="1"/>
</dbReference>
<dbReference type="CDD" id="cd03688">
    <property type="entry name" value="eIF2_gamma_II"/>
    <property type="match status" value="1"/>
</dbReference>
<dbReference type="CDD" id="cd15490">
    <property type="entry name" value="eIF2_gamma_III"/>
    <property type="match status" value="1"/>
</dbReference>
<dbReference type="FunFam" id="2.40.30.10:FF:000009">
    <property type="entry name" value="Eukaryotic translation initiation factor 2 subunit gamma"/>
    <property type="match status" value="1"/>
</dbReference>
<dbReference type="FunFam" id="2.40.30.10:FF:000011">
    <property type="entry name" value="Eukaryotic translation initiation factor 2 subunit gamma"/>
    <property type="match status" value="1"/>
</dbReference>
<dbReference type="FunFam" id="3.40.50.300:FF:000065">
    <property type="entry name" value="Eukaryotic translation initiation factor 2 subunit gamma"/>
    <property type="match status" value="1"/>
</dbReference>
<dbReference type="Gene3D" id="3.40.50.300">
    <property type="entry name" value="P-loop containing nucleotide triphosphate hydrolases"/>
    <property type="match status" value="1"/>
</dbReference>
<dbReference type="Gene3D" id="2.40.30.10">
    <property type="entry name" value="Translation factors"/>
    <property type="match status" value="2"/>
</dbReference>
<dbReference type="InterPro" id="IPR004161">
    <property type="entry name" value="EFTu-like_2"/>
</dbReference>
<dbReference type="InterPro" id="IPR050543">
    <property type="entry name" value="eIF2G"/>
</dbReference>
<dbReference type="InterPro" id="IPR015256">
    <property type="entry name" value="eIF2g_C"/>
</dbReference>
<dbReference type="InterPro" id="IPR044127">
    <property type="entry name" value="eIF2g_dom_2"/>
</dbReference>
<dbReference type="InterPro" id="IPR044128">
    <property type="entry name" value="eIF2g_GTP-bd"/>
</dbReference>
<dbReference type="InterPro" id="IPR027417">
    <property type="entry name" value="P-loop_NTPase"/>
</dbReference>
<dbReference type="InterPro" id="IPR000795">
    <property type="entry name" value="T_Tr_GTP-bd_dom"/>
</dbReference>
<dbReference type="InterPro" id="IPR009000">
    <property type="entry name" value="Transl_B-barrel_sf"/>
</dbReference>
<dbReference type="InterPro" id="IPR009001">
    <property type="entry name" value="Transl_elong_EF1A/Init_IF2_C"/>
</dbReference>
<dbReference type="NCBIfam" id="NF003077">
    <property type="entry name" value="PRK04000.1"/>
    <property type="match status" value="1"/>
</dbReference>
<dbReference type="PANTHER" id="PTHR42854">
    <property type="entry name" value="EUKARYOTIC TRANSLATION INITIATION FACTOR 2 SUBUNIT 3 FAMILY MEMBER"/>
    <property type="match status" value="1"/>
</dbReference>
<dbReference type="PANTHER" id="PTHR42854:SF3">
    <property type="entry name" value="EUKARYOTIC TRANSLATION INITIATION FACTOR 2 SUBUNIT 3-RELATED"/>
    <property type="match status" value="1"/>
</dbReference>
<dbReference type="Pfam" id="PF09173">
    <property type="entry name" value="eIF2_C"/>
    <property type="match status" value="1"/>
</dbReference>
<dbReference type="Pfam" id="PF00009">
    <property type="entry name" value="GTP_EFTU"/>
    <property type="match status" value="1"/>
</dbReference>
<dbReference type="Pfam" id="PF03144">
    <property type="entry name" value="GTP_EFTU_D2"/>
    <property type="match status" value="1"/>
</dbReference>
<dbReference type="PRINTS" id="PR00315">
    <property type="entry name" value="ELONGATNFCT"/>
</dbReference>
<dbReference type="SUPFAM" id="SSF50465">
    <property type="entry name" value="EF-Tu/eEF-1alpha/eIF2-gamma C-terminal domain"/>
    <property type="match status" value="1"/>
</dbReference>
<dbReference type="SUPFAM" id="SSF52540">
    <property type="entry name" value="P-loop containing nucleoside triphosphate hydrolases"/>
    <property type="match status" value="1"/>
</dbReference>
<dbReference type="SUPFAM" id="SSF50447">
    <property type="entry name" value="Translation proteins"/>
    <property type="match status" value="1"/>
</dbReference>
<dbReference type="PROSITE" id="PS51722">
    <property type="entry name" value="G_TR_2"/>
    <property type="match status" value="1"/>
</dbReference>
<comment type="function">
    <text evidence="1">As a subunit of eukaryotic initiation factor 2 eIF2, involved in the early steps of protein synthesis. In the presence of GTP, eIF-2 forms a ternary complex with initiator tRNA Met-tRNAi and then recruits the 40S ribosomal complex and initiation factors eIF-1, eIF-1A and eIF-3 to form the 43S pre-initiation complex (43S PIC), a step that determines the rate of protein translation. The 43S PIC binds to mRNA and scans downstream to the initiation codon, where it forms a 48S initiation complex by codon-anticodon base pairing. This leads to the displacement of eIF-1 to allow GTPase-activating protein (GAP) eIF-5-mediated hydrolysis of eIF2-bound GTP. Hydrolysis of GTP and release of Pi, which makes GTP hydrolysis irreversible, causes the release of the eIF-2-GDP binary complex from the 40S subunit, an event that is essential for the subsequent joining of the 60S ribosomal subunit to form an elongation-competent 80S ribosome. In order for eIF-2 to recycle and catalyze another round of initiation, the GDP bound to eIF-2 must be exchanged with GTP by way of a reaction catalyzed by GDP-GTP exchange factor (GEF) eIF-2B.</text>
</comment>
<comment type="catalytic activity">
    <reaction evidence="1">
        <text>GTP + H2O = GDP + phosphate + H(+)</text>
        <dbReference type="Rhea" id="RHEA:19669"/>
        <dbReference type="ChEBI" id="CHEBI:15377"/>
        <dbReference type="ChEBI" id="CHEBI:15378"/>
        <dbReference type="ChEBI" id="CHEBI:37565"/>
        <dbReference type="ChEBI" id="CHEBI:43474"/>
        <dbReference type="ChEBI" id="CHEBI:58189"/>
        <dbReference type="EC" id="3.6.5.3"/>
    </reaction>
</comment>
<comment type="subunit">
    <text evidence="1 4">Eukaryotic translation initiation factor 2 eIF2 is a heterotrimeric complex composed of an alpha, a beta and a gamma subunit. The factors eIF-1, eIF-2, eIF-3, TIF5/eIF-5 and methionyl-tRNAi form a multifactor complex (MFC) that may bind to the 40S ribosome (By similarity). Interacts with cdc123; the interaction is direct (PubMed:26211610).</text>
</comment>
<comment type="subcellular location">
    <subcellularLocation>
        <location evidence="3">Cytoplasm</location>
        <location evidence="3">Cytosol</location>
    </subcellularLocation>
</comment>
<comment type="similarity">
    <text evidence="2">Belongs to the TRAFAC class translation factor GTPase superfamily. Classic translation factor GTPase family. EIF2G subfamily.</text>
</comment>
<evidence type="ECO:0000250" key="1">
    <source>
        <dbReference type="UniProtKB" id="P32481"/>
    </source>
</evidence>
<evidence type="ECO:0000255" key="2">
    <source>
        <dbReference type="PROSITE-ProRule" id="PRU01059"/>
    </source>
</evidence>
<evidence type="ECO:0000269" key="3">
    <source>
    </source>
</evidence>
<evidence type="ECO:0000269" key="4">
    <source>
    </source>
</evidence>
<accession>Q09130</accession>
<organism>
    <name type="scientific">Schizosaccharomyces pombe (strain 972 / ATCC 24843)</name>
    <name type="common">Fission yeast</name>
    <dbReference type="NCBI Taxonomy" id="284812"/>
    <lineage>
        <taxon>Eukaryota</taxon>
        <taxon>Fungi</taxon>
        <taxon>Dikarya</taxon>
        <taxon>Ascomycota</taxon>
        <taxon>Taphrinomycotina</taxon>
        <taxon>Schizosaccharomycetes</taxon>
        <taxon>Schizosaccharomycetales</taxon>
        <taxon>Schizosaccharomycetaceae</taxon>
        <taxon>Schizosaccharomyces</taxon>
    </lineage>
</organism>
<protein>
    <recommendedName>
        <fullName>Eukaryotic translation initiation factor 2 subunit gamma</fullName>
        <shortName>eIF2-gamma</shortName>
        <ecNumber evidence="1">3.6.5.3</ecNumber>
    </recommendedName>
</protein>
<keyword id="KW-0963">Cytoplasm</keyword>
<keyword id="KW-0342">GTP-binding</keyword>
<keyword id="KW-0378">Hydrolase</keyword>
<keyword id="KW-0396">Initiation factor</keyword>
<keyword id="KW-0547">Nucleotide-binding</keyword>
<keyword id="KW-0648">Protein biosynthesis</keyword>
<keyword id="KW-1185">Reference proteome</keyword>
<reference key="1">
    <citation type="journal article" date="1997" name="Mol. Gen. Genet.">
        <title>Functional analysis of homologs of translation initiation factor 2gamma in yeast.</title>
        <authorList>
            <person name="Erickson F.L."/>
            <person name="Harding L.D."/>
            <person name="Dorris D.R."/>
            <person name="Hannig E.M."/>
        </authorList>
    </citation>
    <scope>NUCLEOTIDE SEQUENCE [MRNA]</scope>
</reference>
<reference key="2">
    <citation type="journal article" date="2002" name="Nature">
        <title>The genome sequence of Schizosaccharomyces pombe.</title>
        <authorList>
            <person name="Wood V."/>
            <person name="Gwilliam R."/>
            <person name="Rajandream M.A."/>
            <person name="Lyne M.H."/>
            <person name="Lyne R."/>
            <person name="Stewart A."/>
            <person name="Sgouros J.G."/>
            <person name="Peat N."/>
            <person name="Hayles J."/>
            <person name="Baker S.G."/>
            <person name="Basham D."/>
            <person name="Bowman S."/>
            <person name="Brooks K."/>
            <person name="Brown D."/>
            <person name="Brown S."/>
            <person name="Chillingworth T."/>
            <person name="Churcher C.M."/>
            <person name="Collins M."/>
            <person name="Connor R."/>
            <person name="Cronin A."/>
            <person name="Davis P."/>
            <person name="Feltwell T."/>
            <person name="Fraser A."/>
            <person name="Gentles S."/>
            <person name="Goble A."/>
            <person name="Hamlin N."/>
            <person name="Harris D.E."/>
            <person name="Hidalgo J."/>
            <person name="Hodgson G."/>
            <person name="Holroyd S."/>
            <person name="Hornsby T."/>
            <person name="Howarth S."/>
            <person name="Huckle E.J."/>
            <person name="Hunt S."/>
            <person name="Jagels K."/>
            <person name="James K.D."/>
            <person name="Jones L."/>
            <person name="Jones M."/>
            <person name="Leather S."/>
            <person name="McDonald S."/>
            <person name="McLean J."/>
            <person name="Mooney P."/>
            <person name="Moule S."/>
            <person name="Mungall K.L."/>
            <person name="Murphy L.D."/>
            <person name="Niblett D."/>
            <person name="Odell C."/>
            <person name="Oliver K."/>
            <person name="O'Neil S."/>
            <person name="Pearson D."/>
            <person name="Quail M.A."/>
            <person name="Rabbinowitsch E."/>
            <person name="Rutherford K.M."/>
            <person name="Rutter S."/>
            <person name="Saunders D."/>
            <person name="Seeger K."/>
            <person name="Sharp S."/>
            <person name="Skelton J."/>
            <person name="Simmonds M.N."/>
            <person name="Squares R."/>
            <person name="Squares S."/>
            <person name="Stevens K."/>
            <person name="Taylor K."/>
            <person name="Taylor R.G."/>
            <person name="Tivey A."/>
            <person name="Walsh S.V."/>
            <person name="Warren T."/>
            <person name="Whitehead S."/>
            <person name="Woodward J.R."/>
            <person name="Volckaert G."/>
            <person name="Aert R."/>
            <person name="Robben J."/>
            <person name="Grymonprez B."/>
            <person name="Weltjens I."/>
            <person name="Vanstreels E."/>
            <person name="Rieger M."/>
            <person name="Schaefer M."/>
            <person name="Mueller-Auer S."/>
            <person name="Gabel C."/>
            <person name="Fuchs M."/>
            <person name="Duesterhoeft A."/>
            <person name="Fritzc C."/>
            <person name="Holzer E."/>
            <person name="Moestl D."/>
            <person name="Hilbert H."/>
            <person name="Borzym K."/>
            <person name="Langer I."/>
            <person name="Beck A."/>
            <person name="Lehrach H."/>
            <person name="Reinhardt R."/>
            <person name="Pohl T.M."/>
            <person name="Eger P."/>
            <person name="Zimmermann W."/>
            <person name="Wedler H."/>
            <person name="Wambutt R."/>
            <person name="Purnelle B."/>
            <person name="Goffeau A."/>
            <person name="Cadieu E."/>
            <person name="Dreano S."/>
            <person name="Gloux S."/>
            <person name="Lelaure V."/>
            <person name="Mottier S."/>
            <person name="Galibert F."/>
            <person name="Aves S.J."/>
            <person name="Xiang Z."/>
            <person name="Hunt C."/>
            <person name="Moore K."/>
            <person name="Hurst S.M."/>
            <person name="Lucas M."/>
            <person name="Rochet M."/>
            <person name="Gaillardin C."/>
            <person name="Tallada V.A."/>
            <person name="Garzon A."/>
            <person name="Thode G."/>
            <person name="Daga R.R."/>
            <person name="Cruzado L."/>
            <person name="Jimenez J."/>
            <person name="Sanchez M."/>
            <person name="del Rey F."/>
            <person name="Benito J."/>
            <person name="Dominguez A."/>
            <person name="Revuelta J.L."/>
            <person name="Moreno S."/>
            <person name="Armstrong J."/>
            <person name="Forsburg S.L."/>
            <person name="Cerutti L."/>
            <person name="Lowe T."/>
            <person name="McCombie W.R."/>
            <person name="Paulsen I."/>
            <person name="Potashkin J."/>
            <person name="Shpakovski G.V."/>
            <person name="Ussery D."/>
            <person name="Barrell B.G."/>
            <person name="Nurse P."/>
        </authorList>
    </citation>
    <scope>NUCLEOTIDE SEQUENCE [LARGE SCALE GENOMIC DNA]</scope>
    <source>
        <strain>972 / ATCC 24843</strain>
    </source>
</reference>
<reference key="3">
    <citation type="journal article" date="2006" name="Nat. Biotechnol.">
        <title>ORFeome cloning and global analysis of protein localization in the fission yeast Schizosaccharomyces pombe.</title>
        <authorList>
            <person name="Matsuyama A."/>
            <person name="Arai R."/>
            <person name="Yashiroda Y."/>
            <person name="Shirai A."/>
            <person name="Kamata A."/>
            <person name="Sekido S."/>
            <person name="Kobayashi Y."/>
            <person name="Hashimoto A."/>
            <person name="Hamamoto M."/>
            <person name="Hiraoka Y."/>
            <person name="Horinouchi S."/>
            <person name="Yoshida M."/>
        </authorList>
    </citation>
    <scope>SUBCELLULAR LOCATION</scope>
</reference>
<reference key="4">
    <citation type="journal article" date="2015" name="Structure">
        <title>Cdc123, a cell cycle regulator needed for eIF2 assembly, is an ATP-grasp protein with unique features.</title>
        <authorList>
            <person name="Panvert M."/>
            <person name="Dubiez E."/>
            <person name="Arnold L."/>
            <person name="Perez J."/>
            <person name="Mechulam Y."/>
            <person name="Seufert W."/>
            <person name="Schmitt E."/>
        </authorList>
    </citation>
    <scope>INTERACTION WITH CDC123</scope>
</reference>
<name>IF2G_SCHPO</name>
<gene>
    <name type="primary">tif213</name>
    <name type="ORF">SPBC17G9.09</name>
</gene>
<feature type="chain" id="PRO_0000137447" description="Eukaryotic translation initiation factor 2 subunit gamma">
    <location>
        <begin position="1"/>
        <end position="446"/>
    </location>
</feature>
<feature type="domain" description="tr-type G" evidence="2">
    <location>
        <begin position="21"/>
        <end position="227"/>
    </location>
</feature>
<feature type="region of interest" description="G1" evidence="2">
    <location>
        <begin position="30"/>
        <end position="37"/>
    </location>
</feature>
<feature type="region of interest" description="G2" evidence="2">
    <location>
        <begin position="58"/>
        <end position="62"/>
    </location>
</feature>
<feature type="region of interest" description="G3" evidence="2">
    <location>
        <begin position="114"/>
        <end position="117"/>
    </location>
</feature>
<feature type="region of interest" description="G4" evidence="2">
    <location>
        <begin position="170"/>
        <end position="173"/>
    </location>
</feature>
<feature type="region of interest" description="G5" evidence="2">
    <location>
        <begin position="205"/>
        <end position="207"/>
    </location>
</feature>
<feature type="region of interest" description="Interacts with cdc123" evidence="1">
    <location>
        <begin position="436"/>
        <end position="446"/>
    </location>
</feature>
<feature type="binding site" evidence="1">
    <location>
        <begin position="33"/>
        <end position="38"/>
    </location>
    <ligand>
        <name>GTP</name>
        <dbReference type="ChEBI" id="CHEBI:37565"/>
    </ligand>
</feature>
<feature type="binding site" evidence="1">
    <location>
        <begin position="170"/>
        <end position="173"/>
    </location>
    <ligand>
        <name>GTP</name>
        <dbReference type="ChEBI" id="CHEBI:37565"/>
    </ligand>
</feature>
<feature type="binding site" evidence="1">
    <location>
        <begin position="205"/>
        <end position="207"/>
    </location>
    <ligand>
        <name>GTP</name>
        <dbReference type="ChEBI" id="CHEBI:37565"/>
    </ligand>
</feature>
<sequence>MAENLDISELSPIHPAIISRQATINIGTIGHVAHGKSTVVKAISGVHTVRFKNELERNITIKLGYANAKIYKCSNEECPRPGCYRSYSSNKEDHPPCEICNSPMNLVRHVSFVDCPGHDILMATMLNGAAVMDAALLLIAGNESCPQPQTSEHLAAIEIMQLKHIIILQNKVDLIRESAAEEHYQSILKFIKGTVAENSPIVPISAQLKYNIDAILEYIVKKIPIPVRDFTTAPRLIVIRSFDVNKPGAEVDDLKGGVAGGSILTGVLRLNDEIEIRPGIVTKDDDGRIRCQPIFSRIISLFAEHNDLKIAVPGGLIGVGTTVDPTLCRADRLVGQVLGSKGNLPEVYTELEINYFLLRRLLGVKSGDKNTTKVQKLAKNEVLMVNIGSTSTGGRVMMVKADMAKILLTAPACTEIGEKVALSRRIEKHWRLIGWAKVVEGKTLKV</sequence>
<proteinExistence type="evidence at protein level"/>